<gene>
    <name evidence="1" type="primary">groEL</name>
    <name evidence="1" type="synonym">groL</name>
    <name type="ordered locus">STER_0253</name>
</gene>
<sequence length="539" mass="56923">MAKDIKFSSDARAAMVRGVDTLADTVKVTLGPKGRNVVLEKAFGSPLITNDGVTIAKEIELEDHFENMGAKLVSEVASKTNDIAGDGTTTATVLTQAIVREGLKNVTAGANPIGIRRGIEAAVAAAVEELKVIAQPVANKEAIAQVAAVSSRSEKVGEYISEAMERVGNDGVITIEESRGMETELEVVEGMQFDRGYLSQYMVTDNEKMVADLENPYILVTDKKISNIQDILPLLEEVLKTSRPLLIIADDVAGEALPTLVLNKIRGTFNVVAVKAPGFGDRRKAMLEDIAVLTGATVITEDLGLELKDATMESLGQASKVTVDKDSTVIVEGAGSAEAIANRVNLIKSQLETTTSEFDREKLQERLAKLSGGVAVIKVGAATETALKEMKLRIEDALNATRAAVEEGIVAGGGTALVNVIAKVAELDLEGDDATGRNIVLRALEEPVRQIAYNAGYEGSVIIDKLKNSPVGTGFNAANGEWVDMVESGIIDPVKVTRSALQNAASVASLILTTEAVVADKPEQKAPAAPATDPGMMGY</sequence>
<name>CH60_STRTD</name>
<keyword id="KW-0067">ATP-binding</keyword>
<keyword id="KW-0143">Chaperone</keyword>
<keyword id="KW-0963">Cytoplasm</keyword>
<keyword id="KW-0413">Isomerase</keyword>
<keyword id="KW-0547">Nucleotide-binding</keyword>
<accession>Q03MK3</accession>
<dbReference type="EC" id="5.6.1.7" evidence="1"/>
<dbReference type="EMBL" id="CP000419">
    <property type="protein sequence ID" value="ABJ65569.1"/>
    <property type="molecule type" value="Genomic_DNA"/>
</dbReference>
<dbReference type="RefSeq" id="WP_011225399.1">
    <property type="nucleotide sequence ID" value="NC_008532.1"/>
</dbReference>
<dbReference type="SMR" id="Q03MK3"/>
<dbReference type="GeneID" id="66898140"/>
<dbReference type="KEGG" id="ste:STER_0253"/>
<dbReference type="HOGENOM" id="CLU_016503_3_0_9"/>
<dbReference type="GO" id="GO:0005737">
    <property type="term" value="C:cytoplasm"/>
    <property type="evidence" value="ECO:0007669"/>
    <property type="project" value="UniProtKB-SubCell"/>
</dbReference>
<dbReference type="GO" id="GO:0005524">
    <property type="term" value="F:ATP binding"/>
    <property type="evidence" value="ECO:0007669"/>
    <property type="project" value="UniProtKB-UniRule"/>
</dbReference>
<dbReference type="GO" id="GO:0140662">
    <property type="term" value="F:ATP-dependent protein folding chaperone"/>
    <property type="evidence" value="ECO:0007669"/>
    <property type="project" value="InterPro"/>
</dbReference>
<dbReference type="GO" id="GO:0016853">
    <property type="term" value="F:isomerase activity"/>
    <property type="evidence" value="ECO:0007669"/>
    <property type="project" value="UniProtKB-KW"/>
</dbReference>
<dbReference type="GO" id="GO:0051082">
    <property type="term" value="F:unfolded protein binding"/>
    <property type="evidence" value="ECO:0007669"/>
    <property type="project" value="UniProtKB-UniRule"/>
</dbReference>
<dbReference type="GO" id="GO:0042026">
    <property type="term" value="P:protein refolding"/>
    <property type="evidence" value="ECO:0007669"/>
    <property type="project" value="UniProtKB-UniRule"/>
</dbReference>
<dbReference type="CDD" id="cd03344">
    <property type="entry name" value="GroEL"/>
    <property type="match status" value="1"/>
</dbReference>
<dbReference type="FunFam" id="1.10.560.10:FF:000001">
    <property type="entry name" value="60 kDa chaperonin"/>
    <property type="match status" value="1"/>
</dbReference>
<dbReference type="FunFam" id="3.50.7.10:FF:000001">
    <property type="entry name" value="60 kDa chaperonin"/>
    <property type="match status" value="1"/>
</dbReference>
<dbReference type="Gene3D" id="3.50.7.10">
    <property type="entry name" value="GroEL"/>
    <property type="match status" value="1"/>
</dbReference>
<dbReference type="Gene3D" id="1.10.560.10">
    <property type="entry name" value="GroEL-like equatorial domain"/>
    <property type="match status" value="1"/>
</dbReference>
<dbReference type="Gene3D" id="3.30.260.10">
    <property type="entry name" value="TCP-1-like chaperonin intermediate domain"/>
    <property type="match status" value="1"/>
</dbReference>
<dbReference type="HAMAP" id="MF_00600">
    <property type="entry name" value="CH60"/>
    <property type="match status" value="1"/>
</dbReference>
<dbReference type="InterPro" id="IPR018370">
    <property type="entry name" value="Chaperonin_Cpn60_CS"/>
</dbReference>
<dbReference type="InterPro" id="IPR001844">
    <property type="entry name" value="Cpn60/GroEL"/>
</dbReference>
<dbReference type="InterPro" id="IPR002423">
    <property type="entry name" value="Cpn60/GroEL/TCP-1"/>
</dbReference>
<dbReference type="InterPro" id="IPR027409">
    <property type="entry name" value="GroEL-like_apical_dom_sf"/>
</dbReference>
<dbReference type="InterPro" id="IPR027413">
    <property type="entry name" value="GROEL-like_equatorial_sf"/>
</dbReference>
<dbReference type="InterPro" id="IPR027410">
    <property type="entry name" value="TCP-1-like_intermed_sf"/>
</dbReference>
<dbReference type="NCBIfam" id="TIGR02348">
    <property type="entry name" value="GroEL"/>
    <property type="match status" value="1"/>
</dbReference>
<dbReference type="NCBIfam" id="NF000592">
    <property type="entry name" value="PRK00013.1"/>
    <property type="match status" value="1"/>
</dbReference>
<dbReference type="NCBIfam" id="NF009487">
    <property type="entry name" value="PRK12849.1"/>
    <property type="match status" value="1"/>
</dbReference>
<dbReference type="NCBIfam" id="NF009488">
    <property type="entry name" value="PRK12850.1"/>
    <property type="match status" value="1"/>
</dbReference>
<dbReference type="NCBIfam" id="NF009489">
    <property type="entry name" value="PRK12851.1"/>
    <property type="match status" value="1"/>
</dbReference>
<dbReference type="PANTHER" id="PTHR45633">
    <property type="entry name" value="60 KDA HEAT SHOCK PROTEIN, MITOCHONDRIAL"/>
    <property type="match status" value="1"/>
</dbReference>
<dbReference type="Pfam" id="PF00118">
    <property type="entry name" value="Cpn60_TCP1"/>
    <property type="match status" value="1"/>
</dbReference>
<dbReference type="PRINTS" id="PR00298">
    <property type="entry name" value="CHAPERONIN60"/>
</dbReference>
<dbReference type="SUPFAM" id="SSF52029">
    <property type="entry name" value="GroEL apical domain-like"/>
    <property type="match status" value="1"/>
</dbReference>
<dbReference type="SUPFAM" id="SSF48592">
    <property type="entry name" value="GroEL equatorial domain-like"/>
    <property type="match status" value="1"/>
</dbReference>
<dbReference type="SUPFAM" id="SSF54849">
    <property type="entry name" value="GroEL-intermediate domain like"/>
    <property type="match status" value="1"/>
</dbReference>
<dbReference type="PROSITE" id="PS00296">
    <property type="entry name" value="CHAPERONINS_CPN60"/>
    <property type="match status" value="1"/>
</dbReference>
<proteinExistence type="inferred from homology"/>
<reference key="1">
    <citation type="journal article" date="2006" name="Proc. Natl. Acad. Sci. U.S.A.">
        <title>Comparative genomics of the lactic acid bacteria.</title>
        <authorList>
            <person name="Makarova K.S."/>
            <person name="Slesarev A."/>
            <person name="Wolf Y.I."/>
            <person name="Sorokin A."/>
            <person name="Mirkin B."/>
            <person name="Koonin E.V."/>
            <person name="Pavlov A."/>
            <person name="Pavlova N."/>
            <person name="Karamychev V."/>
            <person name="Polouchine N."/>
            <person name="Shakhova V."/>
            <person name="Grigoriev I."/>
            <person name="Lou Y."/>
            <person name="Rohksar D."/>
            <person name="Lucas S."/>
            <person name="Huang K."/>
            <person name="Goodstein D.M."/>
            <person name="Hawkins T."/>
            <person name="Plengvidhya V."/>
            <person name="Welker D."/>
            <person name="Hughes J."/>
            <person name="Goh Y."/>
            <person name="Benson A."/>
            <person name="Baldwin K."/>
            <person name="Lee J.-H."/>
            <person name="Diaz-Muniz I."/>
            <person name="Dosti B."/>
            <person name="Smeianov V."/>
            <person name="Wechter W."/>
            <person name="Barabote R."/>
            <person name="Lorca G."/>
            <person name="Altermann E."/>
            <person name="Barrangou R."/>
            <person name="Ganesan B."/>
            <person name="Xie Y."/>
            <person name="Rawsthorne H."/>
            <person name="Tamir D."/>
            <person name="Parker C."/>
            <person name="Breidt F."/>
            <person name="Broadbent J.R."/>
            <person name="Hutkins R."/>
            <person name="O'Sullivan D."/>
            <person name="Steele J."/>
            <person name="Unlu G."/>
            <person name="Saier M.H. Jr."/>
            <person name="Klaenhammer T."/>
            <person name="Richardson P."/>
            <person name="Kozyavkin S."/>
            <person name="Weimer B.C."/>
            <person name="Mills D.A."/>
        </authorList>
    </citation>
    <scope>NUCLEOTIDE SEQUENCE [LARGE SCALE GENOMIC DNA]</scope>
    <source>
        <strain>ATCC BAA-491 / LMD-9</strain>
    </source>
</reference>
<evidence type="ECO:0000255" key="1">
    <source>
        <dbReference type="HAMAP-Rule" id="MF_00600"/>
    </source>
</evidence>
<feature type="chain" id="PRO_1000025841" description="Chaperonin GroEL">
    <location>
        <begin position="1"/>
        <end position="539"/>
    </location>
</feature>
<feature type="binding site" evidence="1">
    <location>
        <begin position="29"/>
        <end position="32"/>
    </location>
    <ligand>
        <name>ATP</name>
        <dbReference type="ChEBI" id="CHEBI:30616"/>
    </ligand>
</feature>
<feature type="binding site" evidence="1">
    <location>
        <begin position="86"/>
        <end position="90"/>
    </location>
    <ligand>
        <name>ATP</name>
        <dbReference type="ChEBI" id="CHEBI:30616"/>
    </ligand>
</feature>
<feature type="binding site" evidence="1">
    <location>
        <position position="413"/>
    </location>
    <ligand>
        <name>ATP</name>
        <dbReference type="ChEBI" id="CHEBI:30616"/>
    </ligand>
</feature>
<feature type="binding site" evidence="1">
    <location>
        <begin position="476"/>
        <end position="478"/>
    </location>
    <ligand>
        <name>ATP</name>
        <dbReference type="ChEBI" id="CHEBI:30616"/>
    </ligand>
</feature>
<feature type="binding site" evidence="1">
    <location>
        <position position="492"/>
    </location>
    <ligand>
        <name>ATP</name>
        <dbReference type="ChEBI" id="CHEBI:30616"/>
    </ligand>
</feature>
<protein>
    <recommendedName>
        <fullName evidence="1">Chaperonin GroEL</fullName>
        <ecNumber evidence="1">5.6.1.7</ecNumber>
    </recommendedName>
    <alternativeName>
        <fullName evidence="1">60 kDa chaperonin</fullName>
    </alternativeName>
    <alternativeName>
        <fullName evidence="1">Chaperonin-60</fullName>
        <shortName evidence="1">Cpn60</shortName>
    </alternativeName>
</protein>
<organism>
    <name type="scientific">Streptococcus thermophilus (strain ATCC BAA-491 / LMD-9)</name>
    <dbReference type="NCBI Taxonomy" id="322159"/>
    <lineage>
        <taxon>Bacteria</taxon>
        <taxon>Bacillati</taxon>
        <taxon>Bacillota</taxon>
        <taxon>Bacilli</taxon>
        <taxon>Lactobacillales</taxon>
        <taxon>Streptococcaceae</taxon>
        <taxon>Streptococcus</taxon>
    </lineage>
</organism>
<comment type="function">
    <text evidence="1">Together with its co-chaperonin GroES, plays an essential role in assisting protein folding. The GroEL-GroES system forms a nano-cage that allows encapsulation of the non-native substrate proteins and provides a physical environment optimized to promote and accelerate protein folding.</text>
</comment>
<comment type="catalytic activity">
    <reaction evidence="1">
        <text>ATP + H2O + a folded polypeptide = ADP + phosphate + an unfolded polypeptide.</text>
        <dbReference type="EC" id="5.6.1.7"/>
    </reaction>
</comment>
<comment type="subunit">
    <text evidence="1">Forms a cylinder of 14 subunits composed of two heptameric rings stacked back-to-back. Interacts with the co-chaperonin GroES.</text>
</comment>
<comment type="subcellular location">
    <subcellularLocation>
        <location evidence="1">Cytoplasm</location>
    </subcellularLocation>
</comment>
<comment type="similarity">
    <text evidence="1">Belongs to the chaperonin (HSP60) family.</text>
</comment>